<name>E139_ARATH</name>
<reference key="1">
    <citation type="submission" date="1999-04" db="EMBL/GenBank/DDBJ databases">
        <title>Structural analysis of Arabidopsis thaliana chromosome 5. XI.</title>
        <authorList>
            <person name="Kaneko T."/>
            <person name="Katoh T."/>
            <person name="Asamizu E."/>
            <person name="Sato S."/>
            <person name="Nakamura Y."/>
            <person name="Kotani H."/>
            <person name="Tabata S."/>
        </authorList>
    </citation>
    <scope>NUCLEOTIDE SEQUENCE [LARGE SCALE GENOMIC DNA]</scope>
    <source>
        <strain>cv. Columbia</strain>
    </source>
</reference>
<reference key="2">
    <citation type="journal article" date="2017" name="Plant J.">
        <title>Araport11: a complete reannotation of the Arabidopsis thaliana reference genome.</title>
        <authorList>
            <person name="Cheng C.Y."/>
            <person name="Krishnakumar V."/>
            <person name="Chan A.P."/>
            <person name="Thibaud-Nissen F."/>
            <person name="Schobel S."/>
            <person name="Town C.D."/>
        </authorList>
    </citation>
    <scope>GENOME REANNOTATION</scope>
    <source>
        <strain>cv. Columbia</strain>
    </source>
</reference>
<reference key="3">
    <citation type="journal article" date="2003" name="Science">
        <title>Empirical analysis of transcriptional activity in the Arabidopsis genome.</title>
        <authorList>
            <person name="Yamada K."/>
            <person name="Lim J."/>
            <person name="Dale J.M."/>
            <person name="Chen H."/>
            <person name="Shinn P."/>
            <person name="Palm C.J."/>
            <person name="Southwick A.M."/>
            <person name="Wu H.C."/>
            <person name="Kim C.J."/>
            <person name="Nguyen M."/>
            <person name="Pham P.K."/>
            <person name="Cheuk R.F."/>
            <person name="Karlin-Newmann G."/>
            <person name="Liu S.X."/>
            <person name="Lam B."/>
            <person name="Sakano H."/>
            <person name="Wu T."/>
            <person name="Yu G."/>
            <person name="Miranda M."/>
            <person name="Quach H.L."/>
            <person name="Tripp M."/>
            <person name="Chang C.H."/>
            <person name="Lee J.M."/>
            <person name="Toriumi M.J."/>
            <person name="Chan M.M."/>
            <person name="Tang C.C."/>
            <person name="Onodera C.S."/>
            <person name="Deng J.M."/>
            <person name="Akiyama K."/>
            <person name="Ansari Y."/>
            <person name="Arakawa T."/>
            <person name="Banh J."/>
            <person name="Banno F."/>
            <person name="Bowser L."/>
            <person name="Brooks S.Y."/>
            <person name="Carninci P."/>
            <person name="Chao Q."/>
            <person name="Choy N."/>
            <person name="Enju A."/>
            <person name="Goldsmith A.D."/>
            <person name="Gurjal M."/>
            <person name="Hansen N.F."/>
            <person name="Hayashizaki Y."/>
            <person name="Johnson-Hopson C."/>
            <person name="Hsuan V.W."/>
            <person name="Iida K."/>
            <person name="Karnes M."/>
            <person name="Khan S."/>
            <person name="Koesema E."/>
            <person name="Ishida J."/>
            <person name="Jiang P.X."/>
            <person name="Jones T."/>
            <person name="Kawai J."/>
            <person name="Kamiya A."/>
            <person name="Meyers C."/>
            <person name="Nakajima M."/>
            <person name="Narusaka M."/>
            <person name="Seki M."/>
            <person name="Sakurai T."/>
            <person name="Satou M."/>
            <person name="Tamse R."/>
            <person name="Vaysberg M."/>
            <person name="Wallender E.K."/>
            <person name="Wong C."/>
            <person name="Yamamura Y."/>
            <person name="Yuan S."/>
            <person name="Shinozaki K."/>
            <person name="Davis R.W."/>
            <person name="Theologis A."/>
            <person name="Ecker J.R."/>
        </authorList>
    </citation>
    <scope>NUCLEOTIDE SEQUENCE [LARGE SCALE MRNA]</scope>
    <source>
        <strain>cv. Columbia</strain>
    </source>
</reference>
<feature type="signal peptide" evidence="3">
    <location>
        <begin position="1"/>
        <end position="25"/>
    </location>
</feature>
<feature type="chain" id="PRO_0000251265" description="Glucan endo-1,3-beta-glucosidase 9">
    <location>
        <begin position="26"/>
        <end position="453"/>
    </location>
</feature>
<feature type="propeptide" id="PRO_0000251266" description="Removed in mature form" evidence="3">
    <location>
        <begin position="454"/>
        <end position="476"/>
    </location>
</feature>
<feature type="active site" description="Proton donor" evidence="2">
    <location>
        <position position="122"/>
    </location>
</feature>
<feature type="lipid moiety-binding region" description="GPI-anchor amidated serine" evidence="3">
    <location>
        <position position="453"/>
    </location>
</feature>
<feature type="glycosylation site" description="N-linked (GlcNAc...) asparagine" evidence="3">
    <location>
        <position position="88"/>
    </location>
</feature>
<feature type="glycosylation site" description="N-linked (GlcNAc...) asparagine" evidence="3">
    <location>
        <position position="101"/>
    </location>
</feature>
<feature type="glycosylation site" description="N-linked (GlcNAc...) asparagine" evidence="3">
    <location>
        <position position="184"/>
    </location>
</feature>
<feature type="glycosylation site" description="N-linked (GlcNAc...) asparagine" evidence="3">
    <location>
        <position position="216"/>
    </location>
</feature>
<feature type="glycosylation site" description="N-linked (GlcNAc...) asparagine" evidence="3">
    <location>
        <position position="277"/>
    </location>
</feature>
<feature type="glycosylation site" description="N-linked (GlcNAc...) asparagine" evidence="3">
    <location>
        <position position="320"/>
    </location>
</feature>
<feature type="glycosylation site" description="N-linked (GlcNAc...) asparagine" evidence="3">
    <location>
        <position position="342"/>
    </location>
</feature>
<feature type="glycosylation site" description="N-linked (GlcNAc...) asparagine" evidence="3">
    <location>
        <position position="374"/>
    </location>
</feature>
<feature type="glycosylation site" description="N-linked (GlcNAc...) asparagine" evidence="3">
    <location>
        <position position="405"/>
    </location>
</feature>
<feature type="disulfide bond" evidence="1">
    <location>
        <begin position="364"/>
        <end position="424"/>
    </location>
</feature>
<organism>
    <name type="scientific">Arabidopsis thaliana</name>
    <name type="common">Mouse-ear cress</name>
    <dbReference type="NCBI Taxonomy" id="3702"/>
    <lineage>
        <taxon>Eukaryota</taxon>
        <taxon>Viridiplantae</taxon>
        <taxon>Streptophyta</taxon>
        <taxon>Embryophyta</taxon>
        <taxon>Tracheophyta</taxon>
        <taxon>Spermatophyta</taxon>
        <taxon>Magnoliopsida</taxon>
        <taxon>eudicotyledons</taxon>
        <taxon>Gunneridae</taxon>
        <taxon>Pentapetalae</taxon>
        <taxon>rosids</taxon>
        <taxon>malvids</taxon>
        <taxon>Brassicales</taxon>
        <taxon>Brassicaceae</taxon>
        <taxon>Camelineae</taxon>
        <taxon>Arabidopsis</taxon>
    </lineage>
</organism>
<gene>
    <name type="ordered locus">At5g58480</name>
    <name type="ORF">MQJ2.8</name>
</gene>
<comment type="catalytic activity">
    <reaction>
        <text>Hydrolysis of (1-&gt;3)-beta-D-glucosidic linkages in (1-&gt;3)-beta-D-glucans.</text>
        <dbReference type="EC" id="3.2.1.39"/>
    </reaction>
</comment>
<comment type="subcellular location">
    <subcellularLocation>
        <location evidence="4">Secreted</location>
        <location evidence="4">Cell wall</location>
    </subcellularLocation>
    <subcellularLocation>
        <location>Cell membrane</location>
        <topology>Lipid-anchor</topology>
        <topology>GPI-anchor</topology>
        <orientation>Extracellular side</orientation>
    </subcellularLocation>
</comment>
<comment type="PTM">
    <text evidence="1">Contains two additional disulfide bonds.</text>
</comment>
<comment type="similarity">
    <text evidence="4">Belongs to the glycosyl hydrolase 17 family.</text>
</comment>
<protein>
    <recommendedName>
        <fullName>Glucan endo-1,3-beta-glucosidase 9</fullName>
        <ecNumber>3.2.1.39</ecNumber>
    </recommendedName>
    <alternativeName>
        <fullName>(1-&gt;3)-beta-glucan endohydrolase 9</fullName>
        <shortName>(1-&gt;3)-beta-glucanase 9</shortName>
    </alternativeName>
    <alternativeName>
        <fullName>Beta-1,3-endoglucanase 9</fullName>
        <shortName>Beta-1,3-glucanase 9</shortName>
    </alternativeName>
</protein>
<keyword id="KW-1003">Cell membrane</keyword>
<keyword id="KW-0134">Cell wall</keyword>
<keyword id="KW-0961">Cell wall biogenesis/degradation</keyword>
<keyword id="KW-1015">Disulfide bond</keyword>
<keyword id="KW-0325">Glycoprotein</keyword>
<keyword id="KW-0326">Glycosidase</keyword>
<keyword id="KW-0336">GPI-anchor</keyword>
<keyword id="KW-0378">Hydrolase</keyword>
<keyword id="KW-0449">Lipoprotein</keyword>
<keyword id="KW-0472">Membrane</keyword>
<keyword id="KW-0611">Plant defense</keyword>
<keyword id="KW-1185">Reference proteome</keyword>
<keyword id="KW-0964">Secreted</keyword>
<keyword id="KW-0732">Signal</keyword>
<dbReference type="EC" id="3.2.1.39"/>
<dbReference type="EMBL" id="AB025632">
    <property type="protein sequence ID" value="BAB10263.1"/>
    <property type="molecule type" value="Genomic_DNA"/>
</dbReference>
<dbReference type="EMBL" id="CP002688">
    <property type="protein sequence ID" value="AED97058.1"/>
    <property type="molecule type" value="Genomic_DNA"/>
</dbReference>
<dbReference type="EMBL" id="BT005117">
    <property type="protein sequence ID" value="AAO50650.1"/>
    <property type="molecule type" value="mRNA"/>
</dbReference>
<dbReference type="EMBL" id="BT003904">
    <property type="protein sequence ID" value="AAO41952.1"/>
    <property type="molecule type" value="mRNA"/>
</dbReference>
<dbReference type="RefSeq" id="NP_200656.2">
    <property type="nucleotide sequence ID" value="NM_125234.4"/>
</dbReference>
<dbReference type="SMR" id="Q9FGH4"/>
<dbReference type="FunCoup" id="Q9FGH4">
    <property type="interactions" value="75"/>
</dbReference>
<dbReference type="STRING" id="3702.Q9FGH4"/>
<dbReference type="CAZy" id="CBM43">
    <property type="family name" value="Carbohydrate-Binding Module Family 43"/>
</dbReference>
<dbReference type="CAZy" id="GH17">
    <property type="family name" value="Glycoside Hydrolase Family 17"/>
</dbReference>
<dbReference type="GlyGen" id="Q9FGH4">
    <property type="glycosylation" value="9 sites"/>
</dbReference>
<dbReference type="PaxDb" id="3702-AT5G58480.1"/>
<dbReference type="ProteomicsDB" id="222009"/>
<dbReference type="EnsemblPlants" id="AT5G58480.1">
    <property type="protein sequence ID" value="AT5G58480.1"/>
    <property type="gene ID" value="AT5G58480"/>
</dbReference>
<dbReference type="GeneID" id="835961"/>
<dbReference type="Gramene" id="AT5G58480.1">
    <property type="protein sequence ID" value="AT5G58480.1"/>
    <property type="gene ID" value="AT5G58480"/>
</dbReference>
<dbReference type="KEGG" id="ath:AT5G58480"/>
<dbReference type="Araport" id="AT5G58480"/>
<dbReference type="TAIR" id="AT5G58480"/>
<dbReference type="eggNOG" id="ENOG502QTM2">
    <property type="taxonomic scope" value="Eukaryota"/>
</dbReference>
<dbReference type="HOGENOM" id="CLU_024953_2_0_1"/>
<dbReference type="InParanoid" id="Q9FGH4"/>
<dbReference type="OMA" id="GEQFHPF"/>
<dbReference type="OrthoDB" id="1293114at2759"/>
<dbReference type="PhylomeDB" id="Q9FGH4"/>
<dbReference type="BioCyc" id="ARA:AT5G58480-MONOMER"/>
<dbReference type="PRO" id="PR:Q9FGH4"/>
<dbReference type="Proteomes" id="UP000006548">
    <property type="component" value="Chromosome 5"/>
</dbReference>
<dbReference type="ExpressionAtlas" id="Q9FGH4">
    <property type="expression patterns" value="baseline and differential"/>
</dbReference>
<dbReference type="GO" id="GO:0005576">
    <property type="term" value="C:extracellular region"/>
    <property type="evidence" value="ECO:0007669"/>
    <property type="project" value="UniProtKB-KW"/>
</dbReference>
<dbReference type="GO" id="GO:0005886">
    <property type="term" value="C:plasma membrane"/>
    <property type="evidence" value="ECO:0007669"/>
    <property type="project" value="UniProtKB-SubCell"/>
</dbReference>
<dbReference type="GO" id="GO:0098552">
    <property type="term" value="C:side of membrane"/>
    <property type="evidence" value="ECO:0007669"/>
    <property type="project" value="UniProtKB-KW"/>
</dbReference>
<dbReference type="GO" id="GO:0042973">
    <property type="term" value="F:glucan endo-1,3-beta-D-glucosidase activity"/>
    <property type="evidence" value="ECO:0007669"/>
    <property type="project" value="UniProtKB-EC"/>
</dbReference>
<dbReference type="GO" id="GO:0005975">
    <property type="term" value="P:carbohydrate metabolic process"/>
    <property type="evidence" value="ECO:0007669"/>
    <property type="project" value="InterPro"/>
</dbReference>
<dbReference type="GO" id="GO:0071555">
    <property type="term" value="P:cell wall organization"/>
    <property type="evidence" value="ECO:0007669"/>
    <property type="project" value="UniProtKB-KW"/>
</dbReference>
<dbReference type="GO" id="GO:0006952">
    <property type="term" value="P:defense response"/>
    <property type="evidence" value="ECO:0007669"/>
    <property type="project" value="UniProtKB-KW"/>
</dbReference>
<dbReference type="FunFam" id="3.20.20.80:FF:000008">
    <property type="entry name" value="Glucan endo-1,3-beta-glucosidase 5"/>
    <property type="match status" value="1"/>
</dbReference>
<dbReference type="FunFam" id="1.20.58.1040:FF:000002">
    <property type="entry name" value="Glucan endo-1,3-beta-glucosidase 8"/>
    <property type="match status" value="1"/>
</dbReference>
<dbReference type="Gene3D" id="1.20.58.1040">
    <property type="match status" value="1"/>
</dbReference>
<dbReference type="Gene3D" id="3.20.20.80">
    <property type="entry name" value="Glycosidases"/>
    <property type="match status" value="1"/>
</dbReference>
<dbReference type="InterPro" id="IPR000490">
    <property type="entry name" value="Glyco_hydro_17"/>
</dbReference>
<dbReference type="InterPro" id="IPR044965">
    <property type="entry name" value="Glyco_hydro_17_plant"/>
</dbReference>
<dbReference type="InterPro" id="IPR017853">
    <property type="entry name" value="Glycoside_hydrolase_SF"/>
</dbReference>
<dbReference type="InterPro" id="IPR012946">
    <property type="entry name" value="X8"/>
</dbReference>
<dbReference type="PANTHER" id="PTHR32227">
    <property type="entry name" value="GLUCAN ENDO-1,3-BETA-GLUCOSIDASE BG1-RELATED-RELATED"/>
    <property type="match status" value="1"/>
</dbReference>
<dbReference type="Pfam" id="PF00332">
    <property type="entry name" value="Glyco_hydro_17"/>
    <property type="match status" value="1"/>
</dbReference>
<dbReference type="Pfam" id="PF07983">
    <property type="entry name" value="X8"/>
    <property type="match status" value="1"/>
</dbReference>
<dbReference type="SMART" id="SM00768">
    <property type="entry name" value="X8"/>
    <property type="match status" value="1"/>
</dbReference>
<dbReference type="SUPFAM" id="SSF51445">
    <property type="entry name" value="(Trans)glycosidases"/>
    <property type="match status" value="1"/>
</dbReference>
<proteinExistence type="evidence at transcript level"/>
<sequence>MARRLFLLLLAVTAGLSLTGTTVRAVGINWGTEASHPLPPSKVVELLKSNGIVKVKLFDADPKVLRALSGSNIGVTIGIQNSMLKSLNASVKVAESWVHDNVTRYFNGGNRVRIEYVAVGEEPFLQSYGNQYKPFVIGAAMNIQNALVKANLANEVKVVVPSSFDSFLSESGRPSSGHFRADLNKTMIELLSFLTKHHSPFFVTISPFLSFHQNKNISLDFSLFKETAKAHKDGRKTYRNSFDLSYDTLVSALFTIGFSEVDIVVSKIGWPTDGAENATSLTAEAFFKGLIVHLEKKTASLPRPPVETYIESLLDEDQRNLSAGNFERHWGVFTFDGQAKYNFSFNHKNQVNAQNVQYLPPKWCVVNNNKDLSNASARALEACAVADCTSILPGGSCSGIRWPGNVSYAFNSLYQQNDHSAESCNFGGLGLITTVDPSEDNCRFSIQLDTSHSSSQTPNFFQSWPLLLLFLLSGLF</sequence>
<accession>Q9FGH4</accession>
<evidence type="ECO:0000250" key="1"/>
<evidence type="ECO:0000250" key="2">
    <source>
        <dbReference type="UniProtKB" id="O22317"/>
    </source>
</evidence>
<evidence type="ECO:0000255" key="3"/>
<evidence type="ECO:0000305" key="4"/>